<dbReference type="EMBL" id="AE004091">
    <property type="protein sequence ID" value="AAG06015.1"/>
    <property type="molecule type" value="Genomic_DNA"/>
</dbReference>
<dbReference type="PIR" id="D83317">
    <property type="entry name" value="D83317"/>
</dbReference>
<dbReference type="RefSeq" id="NP_251317.1">
    <property type="nucleotide sequence ID" value="NC_002516.2"/>
</dbReference>
<dbReference type="RefSeq" id="WP_003090440.1">
    <property type="nucleotide sequence ID" value="NZ_QZGE01000008.1"/>
</dbReference>
<dbReference type="SMR" id="Q9I0L1"/>
<dbReference type="FunCoup" id="Q9I0L1">
    <property type="interactions" value="105"/>
</dbReference>
<dbReference type="STRING" id="208964.PA2627"/>
<dbReference type="PaxDb" id="208964-PA2627"/>
<dbReference type="DNASU" id="882333"/>
<dbReference type="GeneID" id="882333"/>
<dbReference type="KEGG" id="pae:PA2627"/>
<dbReference type="PATRIC" id="fig|208964.12.peg.2749"/>
<dbReference type="PseudoCAP" id="PA2627"/>
<dbReference type="HOGENOM" id="CLU_098920_0_0_6"/>
<dbReference type="InParanoid" id="Q9I0L1"/>
<dbReference type="OrthoDB" id="9788031at2"/>
<dbReference type="PhylomeDB" id="Q9I0L1"/>
<dbReference type="BioCyc" id="PAER208964:G1FZ6-2667-MONOMER"/>
<dbReference type="Proteomes" id="UP000002438">
    <property type="component" value="Chromosome"/>
</dbReference>
<dbReference type="GO" id="GO:0005737">
    <property type="term" value="C:cytoplasm"/>
    <property type="evidence" value="ECO:0007669"/>
    <property type="project" value="UniProtKB-SubCell"/>
</dbReference>
<dbReference type="GO" id="GO:0005886">
    <property type="term" value="C:plasma membrane"/>
    <property type="evidence" value="ECO:0007669"/>
    <property type="project" value="UniProtKB-SubCell"/>
</dbReference>
<dbReference type="FunFam" id="1.10.3890.10:FF:000003">
    <property type="entry name" value="High frequency lysogenization protein HflD homolog"/>
    <property type="match status" value="1"/>
</dbReference>
<dbReference type="Gene3D" id="1.10.3890.10">
    <property type="entry name" value="HflD-like"/>
    <property type="match status" value="1"/>
</dbReference>
<dbReference type="HAMAP" id="MF_00695">
    <property type="entry name" value="HflD_protein"/>
    <property type="match status" value="1"/>
</dbReference>
<dbReference type="InterPro" id="IPR007451">
    <property type="entry name" value="HflD"/>
</dbReference>
<dbReference type="InterPro" id="IPR035932">
    <property type="entry name" value="HflD-like_sf"/>
</dbReference>
<dbReference type="NCBIfam" id="NF001246">
    <property type="entry name" value="PRK00218.1-2"/>
    <property type="match status" value="1"/>
</dbReference>
<dbReference type="NCBIfam" id="NF001247">
    <property type="entry name" value="PRK00218.1-3"/>
    <property type="match status" value="1"/>
</dbReference>
<dbReference type="PANTHER" id="PTHR38100">
    <property type="entry name" value="HIGH FREQUENCY LYSOGENIZATION PROTEIN HFLD"/>
    <property type="match status" value="1"/>
</dbReference>
<dbReference type="PANTHER" id="PTHR38100:SF1">
    <property type="entry name" value="HIGH FREQUENCY LYSOGENIZATION PROTEIN HFLD"/>
    <property type="match status" value="1"/>
</dbReference>
<dbReference type="Pfam" id="PF04356">
    <property type="entry name" value="DUF489"/>
    <property type="match status" value="1"/>
</dbReference>
<dbReference type="SUPFAM" id="SSF101322">
    <property type="entry name" value="YcfC-like"/>
    <property type="match status" value="1"/>
</dbReference>
<sequence length="206" mass="23063">MSDPRQQLIALGAVFESAALVDKLARTGQISEAPLGCMLGSLLARNPASTLDVYGGDSLNLRDGFKALASALERKPGSLQREPLRYALAMLTLERQLDKRGDMLDLIGQRLDQVEQQVQHFGLVHENVIASFASIYQDTLSTFRQRIQVHGDMRHLQVSSNAARIRALLLAGIRSARLWRQLGGSRWQMVFSRRRLLNELYPLLRG</sequence>
<accession>Q9I0L1</accession>
<gene>
    <name evidence="1" type="primary">hflD</name>
    <name type="ordered locus">PA2627</name>
</gene>
<organism>
    <name type="scientific">Pseudomonas aeruginosa (strain ATCC 15692 / DSM 22644 / CIP 104116 / JCM 14847 / LMG 12228 / 1C / PRS 101 / PAO1)</name>
    <dbReference type="NCBI Taxonomy" id="208964"/>
    <lineage>
        <taxon>Bacteria</taxon>
        <taxon>Pseudomonadati</taxon>
        <taxon>Pseudomonadota</taxon>
        <taxon>Gammaproteobacteria</taxon>
        <taxon>Pseudomonadales</taxon>
        <taxon>Pseudomonadaceae</taxon>
        <taxon>Pseudomonas</taxon>
    </lineage>
</organism>
<comment type="subcellular location">
    <subcellularLocation>
        <location>Cytoplasm</location>
    </subcellularLocation>
    <subcellularLocation>
        <location evidence="1">Cell inner membrane</location>
        <topology evidence="1">Peripheral membrane protein</topology>
        <orientation evidence="1">Cytoplasmic side</orientation>
    </subcellularLocation>
</comment>
<comment type="similarity">
    <text evidence="1">Belongs to the HflD family.</text>
</comment>
<feature type="chain" id="PRO_0000071583" description="High frequency lysogenization protein HflD homolog">
    <location>
        <begin position="1"/>
        <end position="206"/>
    </location>
</feature>
<evidence type="ECO:0000255" key="1">
    <source>
        <dbReference type="HAMAP-Rule" id="MF_00695"/>
    </source>
</evidence>
<keyword id="KW-0997">Cell inner membrane</keyword>
<keyword id="KW-1003">Cell membrane</keyword>
<keyword id="KW-0963">Cytoplasm</keyword>
<keyword id="KW-0472">Membrane</keyword>
<keyword id="KW-1185">Reference proteome</keyword>
<reference key="1">
    <citation type="journal article" date="2000" name="Nature">
        <title>Complete genome sequence of Pseudomonas aeruginosa PAO1, an opportunistic pathogen.</title>
        <authorList>
            <person name="Stover C.K."/>
            <person name="Pham X.-Q.T."/>
            <person name="Erwin A.L."/>
            <person name="Mizoguchi S.D."/>
            <person name="Warrener P."/>
            <person name="Hickey M.J."/>
            <person name="Brinkman F.S.L."/>
            <person name="Hufnagle W.O."/>
            <person name="Kowalik D.J."/>
            <person name="Lagrou M."/>
            <person name="Garber R.L."/>
            <person name="Goltry L."/>
            <person name="Tolentino E."/>
            <person name="Westbrock-Wadman S."/>
            <person name="Yuan Y."/>
            <person name="Brody L.L."/>
            <person name="Coulter S.N."/>
            <person name="Folger K.R."/>
            <person name="Kas A."/>
            <person name="Larbig K."/>
            <person name="Lim R.M."/>
            <person name="Smith K.A."/>
            <person name="Spencer D.H."/>
            <person name="Wong G.K.-S."/>
            <person name="Wu Z."/>
            <person name="Paulsen I.T."/>
            <person name="Reizer J."/>
            <person name="Saier M.H. Jr."/>
            <person name="Hancock R.E.W."/>
            <person name="Lory S."/>
            <person name="Olson M.V."/>
        </authorList>
    </citation>
    <scope>NUCLEOTIDE SEQUENCE [LARGE SCALE GENOMIC DNA]</scope>
    <source>
        <strain>ATCC 15692 / DSM 22644 / CIP 104116 / JCM 14847 / LMG 12228 / 1C / PRS 101 / PAO1</strain>
    </source>
</reference>
<proteinExistence type="inferred from homology"/>
<name>HFLD_PSEAE</name>
<protein>
    <recommendedName>
        <fullName evidence="1">High frequency lysogenization protein HflD homolog</fullName>
    </recommendedName>
</protein>